<accession>Q58756</accession>
<name>Y1361_METJA</name>
<reference key="1">
    <citation type="journal article" date="1996" name="Science">
        <title>Complete genome sequence of the methanogenic archaeon, Methanococcus jannaschii.</title>
        <authorList>
            <person name="Bult C.J."/>
            <person name="White O."/>
            <person name="Olsen G.J."/>
            <person name="Zhou L."/>
            <person name="Fleischmann R.D."/>
            <person name="Sutton G.G."/>
            <person name="Blake J.A."/>
            <person name="FitzGerald L.M."/>
            <person name="Clayton R.A."/>
            <person name="Gocayne J.D."/>
            <person name="Kerlavage A.R."/>
            <person name="Dougherty B.A."/>
            <person name="Tomb J.-F."/>
            <person name="Adams M.D."/>
            <person name="Reich C.I."/>
            <person name="Overbeek R."/>
            <person name="Kirkness E.F."/>
            <person name="Weinstock K.G."/>
            <person name="Merrick J.M."/>
            <person name="Glodek A."/>
            <person name="Scott J.L."/>
            <person name="Geoghagen N.S.M."/>
            <person name="Weidman J.F."/>
            <person name="Fuhrmann J.L."/>
            <person name="Nguyen D."/>
            <person name="Utterback T.R."/>
            <person name="Kelley J.M."/>
            <person name="Peterson J.D."/>
            <person name="Sadow P.W."/>
            <person name="Hanna M.C."/>
            <person name="Cotton M.D."/>
            <person name="Roberts K.M."/>
            <person name="Hurst M.A."/>
            <person name="Kaine B.P."/>
            <person name="Borodovsky M."/>
            <person name="Klenk H.-P."/>
            <person name="Fraser C.M."/>
            <person name="Smith H.O."/>
            <person name="Woese C.R."/>
            <person name="Venter J.C."/>
        </authorList>
    </citation>
    <scope>NUCLEOTIDE SEQUENCE [LARGE SCALE GENOMIC DNA]</scope>
    <source>
        <strain>ATCC 43067 / DSM 2661 / JAL-1 / JCM 10045 / NBRC 100440</strain>
    </source>
</reference>
<organism>
    <name type="scientific">Methanocaldococcus jannaschii (strain ATCC 43067 / DSM 2661 / JAL-1 / JCM 10045 / NBRC 100440)</name>
    <name type="common">Methanococcus jannaschii</name>
    <dbReference type="NCBI Taxonomy" id="243232"/>
    <lineage>
        <taxon>Archaea</taxon>
        <taxon>Methanobacteriati</taxon>
        <taxon>Methanobacteriota</taxon>
        <taxon>Methanomada group</taxon>
        <taxon>Methanococci</taxon>
        <taxon>Methanococcales</taxon>
        <taxon>Methanocaldococcaceae</taxon>
        <taxon>Methanocaldococcus</taxon>
    </lineage>
</organism>
<dbReference type="EMBL" id="L77117">
    <property type="protein sequence ID" value="AAB99369.1"/>
    <property type="molecule type" value="Genomic_DNA"/>
</dbReference>
<dbReference type="PIR" id="H64469">
    <property type="entry name" value="H64469"/>
</dbReference>
<dbReference type="RefSeq" id="WP_010870878.1">
    <property type="nucleotide sequence ID" value="NC_000909.1"/>
</dbReference>
<dbReference type="FunCoup" id="Q58756">
    <property type="interactions" value="3"/>
</dbReference>
<dbReference type="STRING" id="243232.MJ_1361"/>
<dbReference type="PaxDb" id="243232-MJ_1361"/>
<dbReference type="EnsemblBacteria" id="AAB99369">
    <property type="protein sequence ID" value="AAB99369"/>
    <property type="gene ID" value="MJ_1361"/>
</dbReference>
<dbReference type="GeneID" id="1452263"/>
<dbReference type="KEGG" id="mja:MJ_1361"/>
<dbReference type="eggNOG" id="arCOG02715">
    <property type="taxonomic scope" value="Archaea"/>
</dbReference>
<dbReference type="HOGENOM" id="CLU_965090_0_0_2"/>
<dbReference type="InParanoid" id="Q58756"/>
<dbReference type="OrthoDB" id="11383at2157"/>
<dbReference type="Proteomes" id="UP000000805">
    <property type="component" value="Chromosome"/>
</dbReference>
<dbReference type="GO" id="GO:0016020">
    <property type="term" value="C:membrane"/>
    <property type="evidence" value="ECO:0007669"/>
    <property type="project" value="UniProtKB-SubCell"/>
</dbReference>
<dbReference type="GO" id="GO:0052618">
    <property type="term" value="F:coenzyme F420-0:L-glutamate ligase activity"/>
    <property type="evidence" value="ECO:0000318"/>
    <property type="project" value="GO_Central"/>
</dbReference>
<dbReference type="Gene3D" id="3.30.1330.100">
    <property type="entry name" value="CofE-like"/>
    <property type="match status" value="1"/>
</dbReference>
<dbReference type="InterPro" id="IPR002847">
    <property type="entry name" value="F420-0_gamma-glut_ligase-dom"/>
</dbReference>
<dbReference type="InterPro" id="IPR012030">
    <property type="entry name" value="UCP006563"/>
</dbReference>
<dbReference type="PANTHER" id="PTHR47917">
    <property type="match status" value="1"/>
</dbReference>
<dbReference type="PANTHER" id="PTHR47917:SF1">
    <property type="entry name" value="COENZYME F420:L-GLUTAMATE LIGASE"/>
    <property type="match status" value="1"/>
</dbReference>
<dbReference type="Pfam" id="PF01996">
    <property type="entry name" value="F420_ligase"/>
    <property type="match status" value="1"/>
</dbReference>
<dbReference type="PIRSF" id="PIRSF006563">
    <property type="entry name" value="UCP006563"/>
    <property type="match status" value="1"/>
</dbReference>
<dbReference type="SUPFAM" id="SSF144010">
    <property type="entry name" value="CofE-like"/>
    <property type="match status" value="1"/>
</dbReference>
<sequence length="292" mass="33193">MRAYPIKTRYIKRGENFIPIVVEAIKNSGIKLEDGDFVVLSEKMVSTAEGNFIDESKFKPGVLAYLCYYWSKYLWGYVLGKLLKVKEDKIKNLRRMPKEETLKHKQTIIEIVGLRYALKPYAEGGVDLTNVPGTYACPLPKNPKKWAEELYKEIKKELGVDVVVMVADTDATYRVLNFYFTALPYAIDGIISGIGVFGFILGRLADVLKIGGFAGCTPLAIAGNEVYKKYSIGELTRIAFICDRVHKTIKNINEVLEKYNTYVITEEILEKLEHTPVVVVKIKEEYKPESQR</sequence>
<protein>
    <recommendedName>
        <fullName>Uncharacterized protein MJ1361</fullName>
    </recommendedName>
</protein>
<keyword id="KW-0472">Membrane</keyword>
<keyword id="KW-1185">Reference proteome</keyword>
<keyword id="KW-0812">Transmembrane</keyword>
<keyword id="KW-1133">Transmembrane helix</keyword>
<comment type="subcellular location">
    <subcellularLocation>
        <location evidence="2">Membrane</location>
        <topology evidence="2">Single-pass membrane protein</topology>
    </subcellularLocation>
</comment>
<proteinExistence type="predicted"/>
<gene>
    <name type="ordered locus">MJ1361</name>
</gene>
<feature type="chain" id="PRO_0000107298" description="Uncharacterized protein MJ1361">
    <location>
        <begin position="1"/>
        <end position="292"/>
    </location>
</feature>
<feature type="transmembrane region" description="Helical" evidence="1">
    <location>
        <begin position="175"/>
        <end position="197"/>
    </location>
</feature>
<evidence type="ECO:0000255" key="1"/>
<evidence type="ECO:0000305" key="2"/>